<evidence type="ECO:0000255" key="1">
    <source>
        <dbReference type="PROSITE-ProRule" id="PRU00169"/>
    </source>
</evidence>
<evidence type="ECO:0000269" key="2">
    <source>
    </source>
</evidence>
<evidence type="ECO:0000303" key="3">
    <source>
    </source>
</evidence>
<evidence type="ECO:0000305" key="4"/>
<comment type="function">
    <text evidence="2">Two-domain response regulator protein in the two-component signal transduction system of the HOG1 pathway (PubMed:30967857). Modulates stress response, melanin biosynthesis and virulence via its regulation of the phosphorylation of HOG1 (PubMed:30967857).</text>
</comment>
<comment type="subcellular location">
    <subcellularLocation>
        <location evidence="2">Cytoplasm</location>
    </subcellularLocation>
</comment>
<comment type="disruption phenotype">
    <text evidence="2">Increases the sensitivity to various stresses, including oxidative stress conferred by H(2)O(2) and sodium nitroprusside dihydrate (PubMed:30967857). Confers higher resistance to fungicides such as fludioxonil and iprodione (PubMed:30967857). Results in significant down-regulation of melanin biosynthesis-related genes but does not affect microsclerotial development (PubMed:30967857). Impairs phosphorylation of HOG1 under the treatment of sorbitol (PubMed:30967857). Severely attenuates fungal virulence on tobacco seedlings (PubMed:30967857).</text>
</comment>
<comment type="similarity">
    <text evidence="4">Belongs to the SSK1 family.</text>
</comment>
<keyword id="KW-0963">Cytoplasm</keyword>
<keyword id="KW-0597">Phosphoprotein</keyword>
<keyword id="KW-1185">Reference proteome</keyword>
<keyword id="KW-0902">Two-component regulatory system</keyword>
<keyword id="KW-0843">Virulence</keyword>
<organism>
    <name type="scientific">Verticillium dahliae (strain VdLs.17 / ATCC MYA-4575 / FGSC 10137)</name>
    <name type="common">Verticillium wilt</name>
    <dbReference type="NCBI Taxonomy" id="498257"/>
    <lineage>
        <taxon>Eukaryota</taxon>
        <taxon>Fungi</taxon>
        <taxon>Dikarya</taxon>
        <taxon>Ascomycota</taxon>
        <taxon>Pezizomycotina</taxon>
        <taxon>Sordariomycetes</taxon>
        <taxon>Hypocreomycetidae</taxon>
        <taxon>Glomerellales</taxon>
        <taxon>Plectosphaerellaceae</taxon>
        <taxon>Verticillium</taxon>
    </lineage>
</organism>
<dbReference type="EMBL" id="DS572702">
    <property type="protein sequence ID" value="EGY23508.1"/>
    <property type="molecule type" value="Genomic_DNA"/>
</dbReference>
<dbReference type="RefSeq" id="XP_009652845.1">
    <property type="nucleotide sequence ID" value="XM_009654550.1"/>
</dbReference>
<dbReference type="STRING" id="498257.G2X3G1"/>
<dbReference type="EnsemblFungi" id="EGY23508">
    <property type="protein sequence ID" value="EGY23508"/>
    <property type="gene ID" value="VDAG_04946"/>
</dbReference>
<dbReference type="GeneID" id="20706409"/>
<dbReference type="KEGG" id="vda:VDAG_04946"/>
<dbReference type="eggNOG" id="KOG0519">
    <property type="taxonomic scope" value="Eukaryota"/>
</dbReference>
<dbReference type="HOGENOM" id="CLU_008307_0_0_1"/>
<dbReference type="InParanoid" id="G2X3G1"/>
<dbReference type="OMA" id="KCAMNGE"/>
<dbReference type="OrthoDB" id="55284at1028384"/>
<dbReference type="Proteomes" id="UP000001611">
    <property type="component" value="Chromosome 3"/>
</dbReference>
<dbReference type="GO" id="GO:0000160">
    <property type="term" value="P:phosphorelay signal transduction system"/>
    <property type="evidence" value="ECO:0007669"/>
    <property type="project" value="InterPro"/>
</dbReference>
<dbReference type="CDD" id="cd17546">
    <property type="entry name" value="REC_hyHK_CKI1_RcsC-like"/>
    <property type="match status" value="1"/>
</dbReference>
<dbReference type="FunFam" id="3.40.50.2300:FF:000146">
    <property type="entry name" value="Putative two-component response regulator SSK1p"/>
    <property type="match status" value="1"/>
</dbReference>
<dbReference type="Gene3D" id="3.40.50.2300">
    <property type="match status" value="1"/>
</dbReference>
<dbReference type="InterPro" id="IPR050956">
    <property type="entry name" value="2C_system_His_kinase"/>
</dbReference>
<dbReference type="InterPro" id="IPR011006">
    <property type="entry name" value="CheY-like_superfamily"/>
</dbReference>
<dbReference type="InterPro" id="IPR001789">
    <property type="entry name" value="Sig_transdc_resp-reg_receiver"/>
</dbReference>
<dbReference type="PANTHER" id="PTHR43719:SF28">
    <property type="entry name" value="PEROXIDE STRESS-ACTIVATED HISTIDINE KINASE MAK1-RELATED"/>
    <property type="match status" value="1"/>
</dbReference>
<dbReference type="PANTHER" id="PTHR43719">
    <property type="entry name" value="TWO-COMPONENT HISTIDINE KINASE"/>
    <property type="match status" value="1"/>
</dbReference>
<dbReference type="Pfam" id="PF00072">
    <property type="entry name" value="Response_reg"/>
    <property type="match status" value="1"/>
</dbReference>
<dbReference type="SMART" id="SM00448">
    <property type="entry name" value="REC"/>
    <property type="match status" value="1"/>
</dbReference>
<dbReference type="SUPFAM" id="SSF52172">
    <property type="entry name" value="CheY-like"/>
    <property type="match status" value="1"/>
</dbReference>
<dbReference type="PROSITE" id="PS50110">
    <property type="entry name" value="RESPONSE_REGULATORY"/>
    <property type="match status" value="1"/>
</dbReference>
<protein>
    <recommendedName>
        <fullName evidence="3">Response regulator SSK1</fullName>
    </recommendedName>
</protein>
<feature type="chain" id="PRO_0000462274" description="Response regulator SSK1">
    <location>
        <begin position="1"/>
        <end position="818"/>
    </location>
</feature>
<feature type="domain" description="Response regulatory" evidence="1">
    <location>
        <begin position="611"/>
        <end position="769"/>
    </location>
</feature>
<feature type="modified residue" description="4-aspartylphosphate" evidence="1">
    <location>
        <position position="660"/>
    </location>
</feature>
<gene>
    <name evidence="3" type="primary">SSK1</name>
    <name type="ORF">VDAG_04946</name>
</gene>
<accession>G2X3G1</accession>
<sequence length="818" mass="86359">MGSDLKARLKAKFSRRSSTSGSVKSGHSHSHGETQLSQRDESRSLASTDNHSRPASVRLDPQSSSNLGAPAPAPDADEVPVRIVISPEDSTATSSSTASTLPSEEVQPQESVTRDPSSQLSAAPKRRAASDGPGNDLHHPMAATTSSLASINENQTLVDASIAASPPATKLPPSVSTSARNTAASSAAAAAAASAAVAVTAAAAAADPDNDDDDDDHLDPLHRGPAASDVLTPAPATAPAPVPATLSASSIARPTGPPRRQSLLPNRQDALIKTLLQAANINEADLTADHLLSINANMVTRKIWVKRAGASATLITINEDDLVDDVRDMILKKYTNSLGRHFDAPDLTLRIFPREERQERLLGPEEPMGRTIDAYFPGGQTVDEALVIDIPTRRTPRPSPRGAVSHPTAVYYAHDTGRPSEAGEGYFPPVGAIPSPNLEVPGAAPNGGPPPPHAIHIQHTGHLPHSISILGTGQVPPIPSPGRSHAYKTRPNRPQLGRTHTSSPTFINGVPSNVGGPPTAHPVHSSFHPRLPPSRTQSNASAESAAIVPPAPPLATPPAPEIPSAIQRISTPPPRIASPRPSSARPARKKIAPAHPVLPAGMLAGGVPPINVLIVEDNPINLKLLEAFVKRLKVRWKTAMNGRDAVKKWKGGGFHLVLMDIQLPIMNGLDATKEIRRLERVNSIGVFSSSASGVFSGSVTSEPEGTEGDIEDKDRLANIELFKSPVIIVALTASSLQSDRHEALAAGCNDFLTKPVNFVWLERKVMEWGCMQALIDFDGWRQWKDFAQDAEENDAAKKAAGVKAKSKKNRLSVTTAAA</sequence>
<name>SSK1_VERDV</name>
<reference key="1">
    <citation type="journal article" date="2011" name="PLoS Pathog.">
        <title>Comparative genomics yields insights into niche adaptation of plant vascular wilt pathogens.</title>
        <authorList>
            <person name="Klosterman S.J."/>
            <person name="Subbarao K.V."/>
            <person name="Kang S."/>
            <person name="Veronese P."/>
            <person name="Gold S.E."/>
            <person name="Thomma B.P.H.J."/>
            <person name="Chen Z."/>
            <person name="Henrissat B."/>
            <person name="Lee Y.-H."/>
            <person name="Park J."/>
            <person name="Garcia-Pedrajas M.D."/>
            <person name="Barbara D.J."/>
            <person name="Anchieta A."/>
            <person name="de Jonge R."/>
            <person name="Santhanam P."/>
            <person name="Maruthachalam K."/>
            <person name="Atallah Z."/>
            <person name="Amyotte S.G."/>
            <person name="Paz Z."/>
            <person name="Inderbitzin P."/>
            <person name="Hayes R.J."/>
            <person name="Heiman D.I."/>
            <person name="Young S."/>
            <person name="Zeng Q."/>
            <person name="Engels R."/>
            <person name="Galagan J."/>
            <person name="Cuomo C.A."/>
            <person name="Dobinson K.F."/>
            <person name="Ma L.-J."/>
        </authorList>
    </citation>
    <scope>NUCLEOTIDE SEQUENCE [LARGE SCALE GENOMIC DNA]</scope>
    <source>
        <strain>VdLs.17 / ATCC MYA-4575 / FGSC 10137</strain>
    </source>
</reference>
<reference key="2">
    <citation type="journal article" date="2019" name="Front. Microbiol.">
        <title>Involvement of a Response Regulator VdSsk1 in Stress Response, Melanin Biosynthesis and Full Virulence in Verticillium dahliae.</title>
        <authorList>
            <person name="Zheng J."/>
            <person name="Tang C."/>
            <person name="Deng C."/>
            <person name="Wang Y."/>
        </authorList>
    </citation>
    <scope>FUNCTION</scope>
    <scope>DISRUPTION PHENOTYPE</scope>
</reference>
<proteinExistence type="inferred from homology"/>